<keyword id="KW-1185">Reference proteome</keyword>
<keyword id="KW-0687">Ribonucleoprotein</keyword>
<keyword id="KW-0689">Ribosomal protein</keyword>
<keyword id="KW-0694">RNA-binding</keyword>
<keyword id="KW-0699">rRNA-binding</keyword>
<accession>O83229</accession>
<dbReference type="EMBL" id="AE000520">
    <property type="protein sequence ID" value="AAC65184.1"/>
    <property type="molecule type" value="Genomic_DNA"/>
</dbReference>
<dbReference type="PIR" id="A71356">
    <property type="entry name" value="A71356"/>
</dbReference>
<dbReference type="RefSeq" id="WP_010881646.1">
    <property type="nucleotide sequence ID" value="NC_021490.2"/>
</dbReference>
<dbReference type="SMR" id="O83229"/>
<dbReference type="IntAct" id="O83229">
    <property type="interactions" value="1"/>
</dbReference>
<dbReference type="STRING" id="243276.TP_0199"/>
<dbReference type="EnsemblBacteria" id="AAC65184">
    <property type="protein sequence ID" value="AAC65184"/>
    <property type="gene ID" value="TP_0199"/>
</dbReference>
<dbReference type="GeneID" id="93875987"/>
<dbReference type="KEGG" id="tpa:TP_0199"/>
<dbReference type="KEGG" id="tpw:TPANIC_0199"/>
<dbReference type="eggNOG" id="COG0093">
    <property type="taxonomic scope" value="Bacteria"/>
</dbReference>
<dbReference type="HOGENOM" id="CLU_095071_2_1_12"/>
<dbReference type="OrthoDB" id="9806379at2"/>
<dbReference type="Proteomes" id="UP000000811">
    <property type="component" value="Chromosome"/>
</dbReference>
<dbReference type="GO" id="GO:0022625">
    <property type="term" value="C:cytosolic large ribosomal subunit"/>
    <property type="evidence" value="ECO:0007669"/>
    <property type="project" value="TreeGrafter"/>
</dbReference>
<dbReference type="GO" id="GO:0070180">
    <property type="term" value="F:large ribosomal subunit rRNA binding"/>
    <property type="evidence" value="ECO:0007669"/>
    <property type="project" value="TreeGrafter"/>
</dbReference>
<dbReference type="GO" id="GO:0003735">
    <property type="term" value="F:structural constituent of ribosome"/>
    <property type="evidence" value="ECO:0007669"/>
    <property type="project" value="InterPro"/>
</dbReference>
<dbReference type="GO" id="GO:0006412">
    <property type="term" value="P:translation"/>
    <property type="evidence" value="ECO:0007669"/>
    <property type="project" value="UniProtKB-UniRule"/>
</dbReference>
<dbReference type="CDD" id="cd00337">
    <property type="entry name" value="Ribosomal_uL14"/>
    <property type="match status" value="1"/>
</dbReference>
<dbReference type="FunFam" id="2.40.150.20:FF:000001">
    <property type="entry name" value="50S ribosomal protein L14"/>
    <property type="match status" value="1"/>
</dbReference>
<dbReference type="Gene3D" id="2.40.150.20">
    <property type="entry name" value="Ribosomal protein L14"/>
    <property type="match status" value="1"/>
</dbReference>
<dbReference type="HAMAP" id="MF_01367">
    <property type="entry name" value="Ribosomal_uL14"/>
    <property type="match status" value="1"/>
</dbReference>
<dbReference type="InterPro" id="IPR000218">
    <property type="entry name" value="Ribosomal_uL14"/>
</dbReference>
<dbReference type="InterPro" id="IPR005745">
    <property type="entry name" value="Ribosomal_uL14_bac-type"/>
</dbReference>
<dbReference type="InterPro" id="IPR019972">
    <property type="entry name" value="Ribosomal_uL14_CS"/>
</dbReference>
<dbReference type="InterPro" id="IPR036853">
    <property type="entry name" value="Ribosomal_uL14_sf"/>
</dbReference>
<dbReference type="NCBIfam" id="TIGR01067">
    <property type="entry name" value="rplN_bact"/>
    <property type="match status" value="1"/>
</dbReference>
<dbReference type="PANTHER" id="PTHR11761">
    <property type="entry name" value="50S/60S RIBOSOMAL PROTEIN L14/L23"/>
    <property type="match status" value="1"/>
</dbReference>
<dbReference type="PANTHER" id="PTHR11761:SF3">
    <property type="entry name" value="LARGE RIBOSOMAL SUBUNIT PROTEIN UL14M"/>
    <property type="match status" value="1"/>
</dbReference>
<dbReference type="Pfam" id="PF00238">
    <property type="entry name" value="Ribosomal_L14"/>
    <property type="match status" value="1"/>
</dbReference>
<dbReference type="SMART" id="SM01374">
    <property type="entry name" value="Ribosomal_L14"/>
    <property type="match status" value="1"/>
</dbReference>
<dbReference type="SUPFAM" id="SSF50193">
    <property type="entry name" value="Ribosomal protein L14"/>
    <property type="match status" value="1"/>
</dbReference>
<dbReference type="PROSITE" id="PS00049">
    <property type="entry name" value="RIBOSOMAL_L14"/>
    <property type="match status" value="1"/>
</dbReference>
<protein>
    <recommendedName>
        <fullName evidence="1">Large ribosomal subunit protein uL14</fullName>
    </recommendedName>
    <alternativeName>
        <fullName evidence="3">50S ribosomal protein L14</fullName>
    </alternativeName>
</protein>
<organism>
    <name type="scientific">Treponema pallidum (strain Nichols)</name>
    <dbReference type="NCBI Taxonomy" id="243276"/>
    <lineage>
        <taxon>Bacteria</taxon>
        <taxon>Pseudomonadati</taxon>
        <taxon>Spirochaetota</taxon>
        <taxon>Spirochaetia</taxon>
        <taxon>Spirochaetales</taxon>
        <taxon>Treponemataceae</taxon>
        <taxon>Treponema</taxon>
    </lineage>
</organism>
<gene>
    <name evidence="1" type="primary">rplN</name>
    <name type="ordered locus">TP_0199</name>
</gene>
<reference key="1">
    <citation type="journal article" date="1998" name="Science">
        <title>Complete genome sequence of Treponema pallidum, the syphilis spirochete.</title>
        <authorList>
            <person name="Fraser C.M."/>
            <person name="Norris S.J."/>
            <person name="Weinstock G.M."/>
            <person name="White O."/>
            <person name="Sutton G.G."/>
            <person name="Dodson R.J."/>
            <person name="Gwinn M.L."/>
            <person name="Hickey E.K."/>
            <person name="Clayton R.A."/>
            <person name="Ketchum K.A."/>
            <person name="Sodergren E."/>
            <person name="Hardham J.M."/>
            <person name="McLeod M.P."/>
            <person name="Salzberg S.L."/>
            <person name="Peterson J.D."/>
            <person name="Khalak H.G."/>
            <person name="Richardson D.L."/>
            <person name="Howell J.K."/>
            <person name="Chidambaram M."/>
            <person name="Utterback T.R."/>
            <person name="McDonald L.A."/>
            <person name="Artiach P."/>
            <person name="Bowman C."/>
            <person name="Cotton M.D."/>
            <person name="Fujii C."/>
            <person name="Garland S.A."/>
            <person name="Hatch B."/>
            <person name="Horst K."/>
            <person name="Roberts K.M."/>
            <person name="Sandusky M."/>
            <person name="Weidman J.F."/>
            <person name="Smith H.O."/>
            <person name="Venter J.C."/>
        </authorList>
    </citation>
    <scope>NUCLEOTIDE SEQUENCE [LARGE SCALE GENOMIC DNA]</scope>
    <source>
        <strain>Nichols</strain>
    </source>
</reference>
<reference key="2">
    <citation type="journal article" date="2012" name="PLoS Genet.">
        <title>RsfA (YbeB) proteins are conserved ribosomal silencing factors.</title>
        <authorList>
            <person name="Hauser R."/>
            <person name="Pech M."/>
            <person name="Kijek J."/>
            <person name="Yamamoto H."/>
            <person name="Titz B."/>
            <person name="Naeve F."/>
            <person name="Tovchigrechko A."/>
            <person name="Yamamoto K."/>
            <person name="Szaflarski W."/>
            <person name="Takeuchi N."/>
            <person name="Stellberger T."/>
            <person name="Diefenbacher M.E."/>
            <person name="Nierhaus K.H."/>
            <person name="Uetz P."/>
        </authorList>
    </citation>
    <scope>INTERACTION WITH RSFS</scope>
    <source>
        <strain>Nichols</strain>
    </source>
</reference>
<comment type="function">
    <text evidence="1">Binds to 23S rRNA. Forms part of two intersubunit bridges in the 70S ribosome.</text>
</comment>
<comment type="subunit">
    <text evidence="1 2">Part of the 50S ribosomal subunit. Forms a cluster with proteins L3 and L19. In the 70S ribosome, L14 and L19 interact and together make contacts with the 16S rRNA in bridges B5 and B8 (By similarity). Interacts with ribosomal silencing factor RsfS, which may inhibit ribosomal subunit association.</text>
</comment>
<comment type="similarity">
    <text evidence="1">Belongs to the universal ribosomal protein uL14 family.</text>
</comment>
<name>RL14_TREPA</name>
<feature type="chain" id="PRO_0000128568" description="Large ribosomal subunit protein uL14">
    <location>
        <begin position="1"/>
        <end position="122"/>
    </location>
</feature>
<evidence type="ECO:0000255" key="1">
    <source>
        <dbReference type="HAMAP-Rule" id="MF_01367"/>
    </source>
</evidence>
<evidence type="ECO:0000269" key="2">
    <source>
    </source>
</evidence>
<evidence type="ECO:0000305" key="3"/>
<proteinExistence type="evidence at protein level"/>
<sequence>MIQVQSRLNVADNSGARLVQCIKVVGGSRRRYASVGDIIVVAVKDALPTSVIKKGSVEKAVIVRVSKEYRRVDGTYIRFDDNACVVIDANGNPKGKRIFGPVARELRDMDFTKIVSLAPEVL</sequence>